<dbReference type="EMBL" id="AM040264">
    <property type="protein sequence ID" value="CAJ11209.1"/>
    <property type="molecule type" value="Genomic_DNA"/>
</dbReference>
<dbReference type="RefSeq" id="WP_002964360.1">
    <property type="nucleotide sequence ID" value="NZ_KN046823.1"/>
</dbReference>
<dbReference type="SMR" id="Q2YM05"/>
<dbReference type="STRING" id="359391.BAB1_1253"/>
<dbReference type="KEGG" id="bmf:BAB1_1253"/>
<dbReference type="PATRIC" id="fig|359391.11.peg.153"/>
<dbReference type="HOGENOM" id="CLU_037562_3_1_5"/>
<dbReference type="Proteomes" id="UP000002719">
    <property type="component" value="Chromosome I"/>
</dbReference>
<dbReference type="GO" id="GO:1990904">
    <property type="term" value="C:ribonucleoprotein complex"/>
    <property type="evidence" value="ECO:0007669"/>
    <property type="project" value="UniProtKB-KW"/>
</dbReference>
<dbReference type="GO" id="GO:0005840">
    <property type="term" value="C:ribosome"/>
    <property type="evidence" value="ECO:0007669"/>
    <property type="project" value="UniProtKB-KW"/>
</dbReference>
<dbReference type="GO" id="GO:0019843">
    <property type="term" value="F:rRNA binding"/>
    <property type="evidence" value="ECO:0007669"/>
    <property type="project" value="UniProtKB-UniRule"/>
</dbReference>
<dbReference type="GO" id="GO:0003735">
    <property type="term" value="F:structural constituent of ribosome"/>
    <property type="evidence" value="ECO:0007669"/>
    <property type="project" value="InterPro"/>
</dbReference>
<dbReference type="GO" id="GO:0006412">
    <property type="term" value="P:translation"/>
    <property type="evidence" value="ECO:0007669"/>
    <property type="project" value="UniProtKB-UniRule"/>
</dbReference>
<dbReference type="FunFam" id="3.30.70.330:FF:000001">
    <property type="entry name" value="50S ribosomal protein L23"/>
    <property type="match status" value="1"/>
</dbReference>
<dbReference type="Gene3D" id="3.30.70.330">
    <property type="match status" value="1"/>
</dbReference>
<dbReference type="HAMAP" id="MF_01369_B">
    <property type="entry name" value="Ribosomal_uL23_B"/>
    <property type="match status" value="1"/>
</dbReference>
<dbReference type="InterPro" id="IPR012677">
    <property type="entry name" value="Nucleotide-bd_a/b_plait_sf"/>
</dbReference>
<dbReference type="InterPro" id="IPR013025">
    <property type="entry name" value="Ribosomal_uL23-like"/>
</dbReference>
<dbReference type="InterPro" id="IPR012678">
    <property type="entry name" value="Ribosomal_uL23/eL15/eS24_sf"/>
</dbReference>
<dbReference type="NCBIfam" id="NF004359">
    <property type="entry name" value="PRK05738.1-3"/>
    <property type="match status" value="1"/>
</dbReference>
<dbReference type="NCBIfam" id="NF004360">
    <property type="entry name" value="PRK05738.1-5"/>
    <property type="match status" value="1"/>
</dbReference>
<dbReference type="NCBIfam" id="NF004363">
    <property type="entry name" value="PRK05738.2-4"/>
    <property type="match status" value="1"/>
</dbReference>
<dbReference type="PANTHER" id="PTHR11620">
    <property type="entry name" value="60S RIBOSOMAL PROTEIN L23A"/>
    <property type="match status" value="1"/>
</dbReference>
<dbReference type="Pfam" id="PF00276">
    <property type="entry name" value="Ribosomal_L23"/>
    <property type="match status" value="1"/>
</dbReference>
<dbReference type="SUPFAM" id="SSF54189">
    <property type="entry name" value="Ribosomal proteins S24e, L23 and L15e"/>
    <property type="match status" value="1"/>
</dbReference>
<organism>
    <name type="scientific">Brucella abortus (strain 2308)</name>
    <dbReference type="NCBI Taxonomy" id="359391"/>
    <lineage>
        <taxon>Bacteria</taxon>
        <taxon>Pseudomonadati</taxon>
        <taxon>Pseudomonadota</taxon>
        <taxon>Alphaproteobacteria</taxon>
        <taxon>Hyphomicrobiales</taxon>
        <taxon>Brucellaceae</taxon>
        <taxon>Brucella/Ochrobactrum group</taxon>
        <taxon>Brucella</taxon>
    </lineage>
</organism>
<protein>
    <recommendedName>
        <fullName evidence="1">Large ribosomal subunit protein uL23</fullName>
    </recommendedName>
    <alternativeName>
        <fullName evidence="2">50S ribosomal protein L23</fullName>
    </alternativeName>
</protein>
<sequence>MTDLRHYDVIVSPVITEKSTIVSEHNQVVFNVARKATKPEIKAAVEALFGVKVTAVNTAVRKGKVKRFRGLVGRQSDVKKAIVTLAEGQSIDVSTGL</sequence>
<proteinExistence type="inferred from homology"/>
<comment type="function">
    <text evidence="1">One of the early assembly proteins it binds 23S rRNA. One of the proteins that surrounds the polypeptide exit tunnel on the outside of the ribosome. Forms the main docking site for trigger factor binding to the ribosome.</text>
</comment>
<comment type="subunit">
    <text evidence="1">Part of the 50S ribosomal subunit. Contacts protein L29, and trigger factor when it is bound to the ribosome.</text>
</comment>
<comment type="similarity">
    <text evidence="1">Belongs to the universal ribosomal protein uL23 family.</text>
</comment>
<feature type="chain" id="PRO_0000272716" description="Large ribosomal subunit protein uL23">
    <location>
        <begin position="1"/>
        <end position="97"/>
    </location>
</feature>
<accession>Q2YM05</accession>
<evidence type="ECO:0000255" key="1">
    <source>
        <dbReference type="HAMAP-Rule" id="MF_01369"/>
    </source>
</evidence>
<evidence type="ECO:0000305" key="2"/>
<gene>
    <name evidence="1" type="primary">rplW</name>
    <name type="ordered locus">BAB1_1253</name>
</gene>
<reference key="1">
    <citation type="journal article" date="2005" name="Infect. Immun.">
        <title>Whole-genome analyses of speciation events in pathogenic Brucellae.</title>
        <authorList>
            <person name="Chain P.S."/>
            <person name="Comerci D.J."/>
            <person name="Tolmasky M.E."/>
            <person name="Larimer F.W."/>
            <person name="Malfatti S.A."/>
            <person name="Vergez L.M."/>
            <person name="Aguero F."/>
            <person name="Land M.L."/>
            <person name="Ugalde R.A."/>
            <person name="Garcia E."/>
        </authorList>
    </citation>
    <scope>NUCLEOTIDE SEQUENCE [LARGE SCALE GENOMIC DNA]</scope>
    <source>
        <strain>2308</strain>
    </source>
</reference>
<name>RL23_BRUA2</name>
<keyword id="KW-1185">Reference proteome</keyword>
<keyword id="KW-0687">Ribonucleoprotein</keyword>
<keyword id="KW-0689">Ribosomal protein</keyword>
<keyword id="KW-0694">RNA-binding</keyword>
<keyword id="KW-0699">rRNA-binding</keyword>